<evidence type="ECO:0000250" key="1"/>
<evidence type="ECO:0000250" key="2">
    <source>
        <dbReference type="UniProtKB" id="Q28046"/>
    </source>
</evidence>
<evidence type="ECO:0000250" key="3">
    <source>
        <dbReference type="UniProtKB" id="Q5ZIV9"/>
    </source>
</evidence>
<evidence type="ECO:0000250" key="4">
    <source>
        <dbReference type="UniProtKB" id="Q60604"/>
    </source>
</evidence>
<evidence type="ECO:0000255" key="5"/>
<evidence type="ECO:0000269" key="6">
    <source>
    </source>
</evidence>
<evidence type="ECO:0000269" key="7">
    <source>
    </source>
</evidence>
<evidence type="ECO:0000269" key="8">
    <source>
    </source>
</evidence>
<evidence type="ECO:0000269" key="9">
    <source>
    </source>
</evidence>
<evidence type="ECO:0000269" key="10">
    <source>
    </source>
</evidence>
<evidence type="ECO:0000303" key="11">
    <source>
    </source>
</evidence>
<evidence type="ECO:0000303" key="12">
    <source>
    </source>
</evidence>
<evidence type="ECO:0000303" key="13">
    <source>
    </source>
</evidence>
<evidence type="ECO:0000303" key="14">
    <source>
    </source>
</evidence>
<evidence type="ECO:0000305" key="15"/>
<evidence type="ECO:0000305" key="16">
    <source>
    </source>
</evidence>
<evidence type="ECO:0000312" key="17">
    <source>
        <dbReference type="HGNC" id="HGNC:21695"/>
    </source>
</evidence>
<evidence type="ECO:0007744" key="18">
    <source>
        <dbReference type="PDB" id="3FG6"/>
    </source>
</evidence>
<evidence type="ECO:0007829" key="19">
    <source>
        <dbReference type="PDB" id="3FG6"/>
    </source>
</evidence>
<evidence type="ECO:0007829" key="20">
    <source>
        <dbReference type="PDB" id="5A1K"/>
    </source>
</evidence>
<evidence type="ECO:0007829" key="21">
    <source>
        <dbReference type="PDB" id="5A1M"/>
    </source>
</evidence>
<sequence>MARELYHEEFARAGKQAGLQVWRIEKLELVPVPQSAHGDFYVGDAYLVLHTAKTSRGFTYHLHFWLGKECSQDESTAAAIFTVQMDDYLGGKPVQNRELQGYESNDFVSYFKGGLKYKAGGVASGLNHVLTNDLTAKRLLHVKGRRVVRATEVPLSWDSFNKGDCFIIDLGTEIYQWCGSSCNKYERLKANQVATGIRYNERKGRSELIVVEEGSEPSELIKVLGEKPELPDGGDDDDIIADISNRKMAKLYMVSDASGSMRVTVVAEENPFSMAMLLSEECFILDHGAAKQIFVWKGKDANPQERKAAMKTAEEFLQQMNYSKNTQIQVLPEGGETPIFKQFFKDWRDKDQSDGFGKVYVTEKVAQIKQIPFDASKLHSSPQMAAQHNMVDDGSGKVEIWRVENNGRIQVDQNSYGEFYGGDCYIILYTYPRGQIIYTWQGANATRDELTTSAFLTVQLDRSLGGQAVQIRVSQGKEPVHLLSLFKDKPLIIYKNGTSKKGGQAPAPPTRLFQVRRNLASITRIVEVDVDANSLNSNDVFVLKLPQNSGYIWVGKGASQEEEKGAEYVASVLKCKTLRIQEGEEPEEFWNSLGGKKDYQTSPLLETQAEDHPPRLYGCSNKTGRFVIEEIPGEFTQDDLAEDDVMLLDAWEQIFIWIGKDANEVEKKESLKSAKMYLETDPSGRDKRTPIVIIKQGHEPPTFTGWFLGWDSSKW</sequence>
<reference key="1">
    <citation type="submission" date="2000-06" db="EMBL/GenBank/DDBJ databases">
        <title>Isolation and characterization of human scinderin.</title>
        <authorList>
            <person name="Ladislas M.L."/>
            <person name="Hill S.J."/>
            <person name="Davis C.W."/>
        </authorList>
    </citation>
    <scope>NUCLEOTIDE SEQUENCE [MRNA] (ISOFORM 1)</scope>
    <source>
        <tissue>Brain</tissue>
    </source>
</reference>
<reference key="2">
    <citation type="journal article" date="2004" name="Nat. Genet.">
        <title>Complete sequencing and characterization of 21,243 full-length human cDNAs.</title>
        <authorList>
            <person name="Ota T."/>
            <person name="Suzuki Y."/>
            <person name="Nishikawa T."/>
            <person name="Otsuki T."/>
            <person name="Sugiyama T."/>
            <person name="Irie R."/>
            <person name="Wakamatsu A."/>
            <person name="Hayashi K."/>
            <person name="Sato H."/>
            <person name="Nagai K."/>
            <person name="Kimura K."/>
            <person name="Makita H."/>
            <person name="Sekine M."/>
            <person name="Obayashi M."/>
            <person name="Nishi T."/>
            <person name="Shibahara T."/>
            <person name="Tanaka T."/>
            <person name="Ishii S."/>
            <person name="Yamamoto J."/>
            <person name="Saito K."/>
            <person name="Kawai Y."/>
            <person name="Isono Y."/>
            <person name="Nakamura Y."/>
            <person name="Nagahari K."/>
            <person name="Murakami K."/>
            <person name="Yasuda T."/>
            <person name="Iwayanagi T."/>
            <person name="Wagatsuma M."/>
            <person name="Shiratori A."/>
            <person name="Sudo H."/>
            <person name="Hosoiri T."/>
            <person name="Kaku Y."/>
            <person name="Kodaira H."/>
            <person name="Kondo H."/>
            <person name="Sugawara M."/>
            <person name="Takahashi M."/>
            <person name="Kanda K."/>
            <person name="Yokoi T."/>
            <person name="Furuya T."/>
            <person name="Kikkawa E."/>
            <person name="Omura Y."/>
            <person name="Abe K."/>
            <person name="Kamihara K."/>
            <person name="Katsuta N."/>
            <person name="Sato K."/>
            <person name="Tanikawa M."/>
            <person name="Yamazaki M."/>
            <person name="Ninomiya K."/>
            <person name="Ishibashi T."/>
            <person name="Yamashita H."/>
            <person name="Murakawa K."/>
            <person name="Fujimori K."/>
            <person name="Tanai H."/>
            <person name="Kimata M."/>
            <person name="Watanabe M."/>
            <person name="Hiraoka S."/>
            <person name="Chiba Y."/>
            <person name="Ishida S."/>
            <person name="Ono Y."/>
            <person name="Takiguchi S."/>
            <person name="Watanabe S."/>
            <person name="Yosida M."/>
            <person name="Hotuta T."/>
            <person name="Kusano J."/>
            <person name="Kanehori K."/>
            <person name="Takahashi-Fujii A."/>
            <person name="Hara H."/>
            <person name="Tanase T.-O."/>
            <person name="Nomura Y."/>
            <person name="Togiya S."/>
            <person name="Komai F."/>
            <person name="Hara R."/>
            <person name="Takeuchi K."/>
            <person name="Arita M."/>
            <person name="Imose N."/>
            <person name="Musashino K."/>
            <person name="Yuuki H."/>
            <person name="Oshima A."/>
            <person name="Sasaki N."/>
            <person name="Aotsuka S."/>
            <person name="Yoshikawa Y."/>
            <person name="Matsunawa H."/>
            <person name="Ichihara T."/>
            <person name="Shiohata N."/>
            <person name="Sano S."/>
            <person name="Moriya S."/>
            <person name="Momiyama H."/>
            <person name="Satoh N."/>
            <person name="Takami S."/>
            <person name="Terashima Y."/>
            <person name="Suzuki O."/>
            <person name="Nakagawa S."/>
            <person name="Senoh A."/>
            <person name="Mizoguchi H."/>
            <person name="Goto Y."/>
            <person name="Shimizu F."/>
            <person name="Wakebe H."/>
            <person name="Hishigaki H."/>
            <person name="Watanabe T."/>
            <person name="Sugiyama A."/>
            <person name="Takemoto M."/>
            <person name="Kawakami B."/>
            <person name="Yamazaki M."/>
            <person name="Watanabe K."/>
            <person name="Kumagai A."/>
            <person name="Itakura S."/>
            <person name="Fukuzumi Y."/>
            <person name="Fujimori Y."/>
            <person name="Komiyama M."/>
            <person name="Tashiro H."/>
            <person name="Tanigami A."/>
            <person name="Fujiwara T."/>
            <person name="Ono T."/>
            <person name="Yamada K."/>
            <person name="Fujii Y."/>
            <person name="Ozaki K."/>
            <person name="Hirao M."/>
            <person name="Ohmori Y."/>
            <person name="Kawabata A."/>
            <person name="Hikiji T."/>
            <person name="Kobatake N."/>
            <person name="Inagaki H."/>
            <person name="Ikema Y."/>
            <person name="Okamoto S."/>
            <person name="Okitani R."/>
            <person name="Kawakami T."/>
            <person name="Noguchi S."/>
            <person name="Itoh T."/>
            <person name="Shigeta K."/>
            <person name="Senba T."/>
            <person name="Matsumura K."/>
            <person name="Nakajima Y."/>
            <person name="Mizuno T."/>
            <person name="Morinaga M."/>
            <person name="Sasaki M."/>
            <person name="Togashi T."/>
            <person name="Oyama M."/>
            <person name="Hata H."/>
            <person name="Watanabe M."/>
            <person name="Komatsu T."/>
            <person name="Mizushima-Sugano J."/>
            <person name="Satoh T."/>
            <person name="Shirai Y."/>
            <person name="Takahashi Y."/>
            <person name="Nakagawa K."/>
            <person name="Okumura K."/>
            <person name="Nagase T."/>
            <person name="Nomura N."/>
            <person name="Kikuchi H."/>
            <person name="Masuho Y."/>
            <person name="Yamashita R."/>
            <person name="Nakai K."/>
            <person name="Yada T."/>
            <person name="Nakamura Y."/>
            <person name="Ohara O."/>
            <person name="Isogai T."/>
            <person name="Sugano S."/>
        </authorList>
    </citation>
    <scope>NUCLEOTIDE SEQUENCE [LARGE SCALE MRNA] (ISOFORM 1)</scope>
    <source>
        <tissue>Placenta</tissue>
        <tissue>Tongue</tissue>
    </source>
</reference>
<reference key="3">
    <citation type="journal article" date="2001" name="DNA Res.">
        <title>Prediction of the coding sequences of unidentified human genes. XXI. The complete sequences of 60 new cDNA clones from brain which code for large proteins.</title>
        <authorList>
            <person name="Nagase T."/>
            <person name="Kikuno R."/>
            <person name="Ohara O."/>
        </authorList>
    </citation>
    <scope>NUCLEOTIDE SEQUENCE [LARGE SCALE MRNA] (ISOFORM 2)</scope>
    <source>
        <tissue>Brain</tissue>
    </source>
</reference>
<reference key="4">
    <citation type="journal article" date="2003" name="Nature">
        <title>The DNA sequence of human chromosome 7.</title>
        <authorList>
            <person name="Hillier L.W."/>
            <person name="Fulton R.S."/>
            <person name="Fulton L.A."/>
            <person name="Graves T.A."/>
            <person name="Pepin K.H."/>
            <person name="Wagner-McPherson C."/>
            <person name="Layman D."/>
            <person name="Maas J."/>
            <person name="Jaeger S."/>
            <person name="Walker R."/>
            <person name="Wylie K."/>
            <person name="Sekhon M."/>
            <person name="Becker M.C."/>
            <person name="O'Laughlin M.D."/>
            <person name="Schaller M.E."/>
            <person name="Fewell G.A."/>
            <person name="Delehaunty K.D."/>
            <person name="Miner T.L."/>
            <person name="Nash W.E."/>
            <person name="Cordes M."/>
            <person name="Du H."/>
            <person name="Sun H."/>
            <person name="Edwards J."/>
            <person name="Bradshaw-Cordum H."/>
            <person name="Ali J."/>
            <person name="Andrews S."/>
            <person name="Isak A."/>
            <person name="Vanbrunt A."/>
            <person name="Nguyen C."/>
            <person name="Du F."/>
            <person name="Lamar B."/>
            <person name="Courtney L."/>
            <person name="Kalicki J."/>
            <person name="Ozersky P."/>
            <person name="Bielicki L."/>
            <person name="Scott K."/>
            <person name="Holmes A."/>
            <person name="Harkins R."/>
            <person name="Harris A."/>
            <person name="Strong C.M."/>
            <person name="Hou S."/>
            <person name="Tomlinson C."/>
            <person name="Dauphin-Kohlberg S."/>
            <person name="Kozlowicz-Reilly A."/>
            <person name="Leonard S."/>
            <person name="Rohlfing T."/>
            <person name="Rock S.M."/>
            <person name="Tin-Wollam A.-M."/>
            <person name="Abbott A."/>
            <person name="Minx P."/>
            <person name="Maupin R."/>
            <person name="Strowmatt C."/>
            <person name="Latreille P."/>
            <person name="Miller N."/>
            <person name="Johnson D."/>
            <person name="Murray J."/>
            <person name="Woessner J.P."/>
            <person name="Wendl M.C."/>
            <person name="Yang S.-P."/>
            <person name="Schultz B.R."/>
            <person name="Wallis J.W."/>
            <person name="Spieth J."/>
            <person name="Bieri T.A."/>
            <person name="Nelson J.O."/>
            <person name="Berkowicz N."/>
            <person name="Wohldmann P.E."/>
            <person name="Cook L.L."/>
            <person name="Hickenbotham M.T."/>
            <person name="Eldred J."/>
            <person name="Williams D."/>
            <person name="Bedell J.A."/>
            <person name="Mardis E.R."/>
            <person name="Clifton S.W."/>
            <person name="Chissoe S.L."/>
            <person name="Marra M.A."/>
            <person name="Raymond C."/>
            <person name="Haugen E."/>
            <person name="Gillett W."/>
            <person name="Zhou Y."/>
            <person name="James R."/>
            <person name="Phelps K."/>
            <person name="Iadanoto S."/>
            <person name="Bubb K."/>
            <person name="Simms E."/>
            <person name="Levy R."/>
            <person name="Clendenning J."/>
            <person name="Kaul R."/>
            <person name="Kent W.J."/>
            <person name="Furey T.S."/>
            <person name="Baertsch R.A."/>
            <person name="Brent M.R."/>
            <person name="Keibler E."/>
            <person name="Flicek P."/>
            <person name="Bork P."/>
            <person name="Suyama M."/>
            <person name="Bailey J.A."/>
            <person name="Portnoy M.E."/>
            <person name="Torrents D."/>
            <person name="Chinwalla A.T."/>
            <person name="Gish W.R."/>
            <person name="Eddy S.R."/>
            <person name="McPherson J.D."/>
            <person name="Olson M.V."/>
            <person name="Eichler E.E."/>
            <person name="Green E.D."/>
            <person name="Waterston R.H."/>
            <person name="Wilson R.K."/>
        </authorList>
    </citation>
    <scope>NUCLEOTIDE SEQUENCE [LARGE SCALE GENOMIC DNA]</scope>
</reference>
<reference key="5">
    <citation type="submission" date="2005-07" db="EMBL/GenBank/DDBJ databases">
        <authorList>
            <person name="Mural R.J."/>
            <person name="Istrail S."/>
            <person name="Sutton G.G."/>
            <person name="Florea L."/>
            <person name="Halpern A.L."/>
            <person name="Mobarry C.M."/>
            <person name="Lippert R."/>
            <person name="Walenz B."/>
            <person name="Shatkay H."/>
            <person name="Dew I."/>
            <person name="Miller J.R."/>
            <person name="Flanigan M.J."/>
            <person name="Edwards N.J."/>
            <person name="Bolanos R."/>
            <person name="Fasulo D."/>
            <person name="Halldorsson B.V."/>
            <person name="Hannenhalli S."/>
            <person name="Turner R."/>
            <person name="Yooseph S."/>
            <person name="Lu F."/>
            <person name="Nusskern D.R."/>
            <person name="Shue B.C."/>
            <person name="Zheng X.H."/>
            <person name="Zhong F."/>
            <person name="Delcher A.L."/>
            <person name="Huson D.H."/>
            <person name="Kravitz S.A."/>
            <person name="Mouchard L."/>
            <person name="Reinert K."/>
            <person name="Remington K.A."/>
            <person name="Clark A.G."/>
            <person name="Waterman M.S."/>
            <person name="Eichler E.E."/>
            <person name="Adams M.D."/>
            <person name="Hunkapiller M.W."/>
            <person name="Myers E.W."/>
            <person name="Venter J.C."/>
        </authorList>
    </citation>
    <scope>NUCLEOTIDE SEQUENCE [LARGE SCALE GENOMIC DNA]</scope>
</reference>
<reference key="6">
    <citation type="journal article" date="2004" name="Genome Res.">
        <title>The status, quality, and expansion of the NIH full-length cDNA project: the Mammalian Gene Collection (MGC).</title>
        <authorList>
            <consortium name="The MGC Project Team"/>
        </authorList>
    </citation>
    <scope>NUCLEOTIDE SEQUENCE [LARGE SCALE MRNA] (ISOFORM 1)</scope>
    <scope>NUCLEOTIDE SEQUENCE [LARGE SCALE MRNA] OF 1-407 (ISOFORM 3)</scope>
    <scope>VARIANT ARG-61</scope>
    <source>
        <tissue>Melanoma</tissue>
        <tissue>Skin</tissue>
    </source>
</reference>
<reference key="7">
    <citation type="journal article" date="1996" name="Blood">
        <title>Recombinant scinderin, an F-actin severing protein, increases calcium-induced release of serotonin from permeabilized platelets, an effect blocked by two scinderin-derived actin-binding peptides and phosphatidylinositol 4,5-bisphosphate.</title>
        <authorList>
            <person name="Marcu M.G."/>
            <person name="Zhang L."/>
            <person name="Nau-Staudt K."/>
            <person name="Trifaro J.M."/>
        </authorList>
    </citation>
    <scope>FUNCTION</scope>
</reference>
<reference key="8">
    <citation type="journal article" date="2001" name="Blood">
        <title>Expression of scinderin in megakaryoblastic leukemia cells induces differentiation, maturation, and apoptosis with release of plateletlike particles and inhibits proliferation and tumorigenesis.</title>
        <authorList>
            <person name="Zunino R."/>
            <person name="Li Q."/>
            <person name="Rose S.D."/>
            <person name="Romero-Benitez M.M."/>
            <person name="Lejen T."/>
            <person name="Brandan N.C."/>
            <person name="Trifaro J.M."/>
        </authorList>
    </citation>
    <scope>FUNCTION</scope>
    <scope>TISSUE SPECIFICITY</scope>
</reference>
<reference key="9">
    <citation type="journal article" date="2009" name="Proc. Natl. Acad. Sci. U.S.A.">
        <title>The crystal structure of the C-terminus of adseverin reveals the actin-binding interface.</title>
        <authorList>
            <person name="Chumnarnsilpa S."/>
            <person name="Lee W.L."/>
            <person name="Nag S."/>
            <person name="Kannan B."/>
            <person name="Larsson M."/>
            <person name="Burtnick L.D."/>
            <person name="Robinson R.C."/>
        </authorList>
    </citation>
    <scope>X-RAY CRYSTALLOGRAPHY (3.00 ANGSTROMS) OF 345-715 IN COMPLEX WITH CALCIUM</scope>
    <scope>MUTAGENESIS OF PHE-455</scope>
</reference>
<reference key="10">
    <citation type="journal article" date="2015" name="Nat. Commun.">
        <title>Calcium-controlled conformational choreography in the N-terminal half of adseverin.</title>
        <authorList>
            <person name="Chumnarnsilpa S."/>
            <person name="Robinson R.C."/>
            <person name="Grimes J.M."/>
            <person name="Leyrat C."/>
        </authorList>
    </citation>
    <scope>X-RAY CRYSTALLOGRAPHY (1.81 ANGSTROMS) OF 6-350</scope>
    <scope>FUNCTION</scope>
    <scope>MUTAGENESIS OF MET-310 AND GLU-314</scope>
</reference>
<comment type="function">
    <text evidence="2 3 4 6 9 10">Ca(2+)-dependent actin filament-severing protein that has a regulatory function in exocytosis by affecting the organization of the microfilament network underneath the plasma membrane (PubMed:26365202, PubMed:8547642). Severing activity is inhibited by phosphatidylinositol 4,5-bis-phosphate (PIP2) (By similarity). In vitro, also has barbed end capping and nucleating activities in the presence of Ca(2+). Required for megakaryocyte differentiation, maturation, polyploidization and apoptosis with the release of platelet-like particles (PubMed:11568009). Plays a role in osteoclastogenesis (OCG) and actin cytoskeletal organization in osteoclasts (By similarity). Regulates chondrocyte proliferation and differentiation (By similarity). Inhibits cell proliferation and tumorigenesis. Signaling is mediated by MAPK, p38 and JNK pathways (PubMed:11568009).</text>
</comment>
<comment type="interaction">
    <interactant intactId="EBI-350454">
        <id>Q9Y6U3</id>
    </interactant>
    <interactant intactId="EBI-7850114">
        <id>Q8WUZ0</id>
        <label>BCL7C</label>
    </interactant>
    <organismsDiffer>false</organismsDiffer>
    <experiments>2</experiments>
</comment>
<comment type="subcellular location">
    <subcellularLocation>
        <location evidence="15">Cytoplasm</location>
        <location evidence="15">Cytoskeleton</location>
    </subcellularLocation>
    <subcellularLocation>
        <location evidence="4">Cell projection</location>
        <location evidence="4">Podosome</location>
    </subcellularLocation>
</comment>
<comment type="alternative products">
    <event type="alternative splicing"/>
    <isoform>
        <id>Q9Y6U3-1</id>
        <name>1</name>
        <sequence type="displayed"/>
    </isoform>
    <isoform>
        <id>Q9Y6U3-2</id>
        <name>2</name>
        <sequence type="described" ref="VSP_012427 VSP_012428"/>
    </isoform>
    <isoform>
        <id>Q9Y6U3-3</id>
        <name>3</name>
        <sequence type="described" ref="VSP_040548"/>
    </isoform>
</comment>
<comment type="tissue specificity">
    <text evidence="6">Expressed in megakaryocytes.</text>
</comment>
<comment type="miscellaneous">
    <text evidence="16">Scinderin comes from the latine world 'scincere', meaning 'to cut'.</text>
</comment>
<comment type="similarity">
    <text evidence="15">Belongs to the villin/gelsolin family.</text>
</comment>
<comment type="sequence caution" evidence="15">
    <conflict type="erroneous initiation">
        <sequence resource="EMBL-CDS" id="BAB67798"/>
    </conflict>
    <text>Extended N-terminus.</text>
</comment>
<proteinExistence type="evidence at protein level"/>
<feature type="chain" id="PRO_0000218744" description="Scinderin">
    <location>
        <begin position="1"/>
        <end position="715"/>
    </location>
</feature>
<feature type="repeat" description="Gelsolin-like 1">
    <location>
        <begin position="27"/>
        <end position="76"/>
    </location>
</feature>
<feature type="repeat" description="Gelsolin-like 2">
    <location>
        <begin position="148"/>
        <end position="188"/>
    </location>
</feature>
<feature type="repeat" description="Gelsolin-like 3">
    <location>
        <begin position="265"/>
        <end position="307"/>
    </location>
</feature>
<feature type="repeat" description="Gelsolin-like 4">
    <location>
        <begin position="398"/>
        <end position="451"/>
    </location>
</feature>
<feature type="repeat" description="Gelsolin-like 5">
    <location>
        <begin position="523"/>
        <end position="564"/>
    </location>
</feature>
<feature type="repeat" description="Gelsolin-like 6">
    <location>
        <begin position="626"/>
        <end position="668"/>
    </location>
</feature>
<feature type="region of interest" description="Actin-severing" evidence="5">
    <location>
        <begin position="1"/>
        <end position="363"/>
    </location>
</feature>
<feature type="region of interest" description="Ca(2+)-dependent actin binding">
    <location>
        <begin position="364"/>
        <end position="715"/>
    </location>
</feature>
<feature type="binding site" evidence="1">
    <location>
        <begin position="112"/>
        <end position="119"/>
    </location>
    <ligand>
        <name>a 1,2-diacyl-sn-glycero-3-phospho-(1D-myo-inositol-4,5-bisphosphate)</name>
        <dbReference type="ChEBI" id="CHEBI:58456"/>
    </ligand>
</feature>
<feature type="binding site" evidence="1">
    <location>
        <begin position="138"/>
        <end position="146"/>
    </location>
    <ligand>
        <name>a 1,2-diacyl-sn-glycero-3-phospho-(1D-myo-inositol-4,5-bisphosphate)</name>
        <dbReference type="ChEBI" id="CHEBI:58456"/>
    </ligand>
</feature>
<feature type="binding site" evidence="18">
    <location>
        <position position="538"/>
    </location>
    <ligand>
        <name>Ca(2+)</name>
        <dbReference type="ChEBI" id="CHEBI:29108"/>
        <label>1</label>
    </ligand>
</feature>
<feature type="binding site" evidence="18">
    <location>
        <position position="539"/>
    </location>
    <ligand>
        <name>Ca(2+)</name>
        <dbReference type="ChEBI" id="CHEBI:29108"/>
        <label>1</label>
    </ligand>
</feature>
<feature type="binding site" evidence="18">
    <location>
        <position position="562"/>
    </location>
    <ligand>
        <name>Ca(2+)</name>
        <dbReference type="ChEBI" id="CHEBI:29108"/>
        <label>1</label>
    </ligand>
</feature>
<feature type="binding site" evidence="18">
    <location>
        <position position="643"/>
    </location>
    <ligand>
        <name>Ca(2+)</name>
        <dbReference type="ChEBI" id="CHEBI:29108"/>
        <label>2</label>
    </ligand>
</feature>
<feature type="binding site" evidence="18">
    <location>
        <position position="644"/>
    </location>
    <ligand>
        <name>Ca(2+)</name>
        <dbReference type="ChEBI" id="CHEBI:29108"/>
        <label>2</label>
    </ligand>
</feature>
<feature type="binding site" evidence="18">
    <location>
        <position position="666"/>
    </location>
    <ligand>
        <name>Ca(2+)</name>
        <dbReference type="ChEBI" id="CHEBI:29108"/>
        <label>2</label>
    </ligand>
</feature>
<feature type="modified residue" description="Phosphotyrosine" evidence="4">
    <location>
        <position position="102"/>
    </location>
</feature>
<feature type="modified residue" description="Phosphotyrosine" evidence="4">
    <location>
        <position position="599"/>
    </location>
</feature>
<feature type="splice variant" id="VSP_040548" description="In isoform 3." evidence="12">
    <location>
        <begin position="1"/>
        <end position="247"/>
    </location>
</feature>
<feature type="splice variant" id="VSP_012427" description="In isoform 2." evidence="11">
    <original>VDVDANSLNSNDVFVLKLPQNSGYIWVGKGASQEEEKGAEYVASVLKCKTLRI</original>
    <variation>RSSGIPLEGKKTTRPHHYWKPRLKTIHLGFTAALTKLEDLLLKRFQESSPRMI</variation>
    <location>
        <begin position="528"/>
        <end position="580"/>
    </location>
</feature>
<feature type="splice variant" id="VSP_012428" description="In isoform 2." evidence="11">
    <location>
        <begin position="581"/>
        <end position="715"/>
    </location>
</feature>
<feature type="sequence variant" id="VAR_059956" description="In dbSNP:rs2240572." evidence="7">
    <original>H</original>
    <variation>R</variation>
    <location>
        <position position="61"/>
    </location>
</feature>
<feature type="sequence variant" id="VAR_059957" description="In dbSNP:rs35083013.">
    <original>A</original>
    <variation>P</variation>
    <location>
        <position position="443"/>
    </location>
</feature>
<feature type="sequence variant" id="VAR_057470" description="In dbSNP:rs17166250.">
    <original>F</original>
    <variation>L</variation>
    <location>
        <position position="455"/>
    </location>
</feature>
<feature type="sequence variant" id="VAR_059958" description="In dbSNP:rs35705332.">
    <original>K</original>
    <variation>R</variation>
    <location>
        <position position="500"/>
    </location>
</feature>
<feature type="sequence variant" id="VAR_057471" description="In dbSNP:rs1138957.">
    <original>L</original>
    <variation>F</variation>
    <location>
        <position position="578"/>
    </location>
</feature>
<feature type="mutagenesis site" description="Increases calcium-independent actin-severing activity." evidence="9">
    <original>M</original>
    <variation>D</variation>
    <location>
        <position position="310"/>
    </location>
</feature>
<feature type="mutagenesis site" description="Increases calcium-independent actin-severing activity." evidence="9">
    <original>E</original>
    <variation>S</variation>
    <location>
        <position position="314"/>
    </location>
</feature>
<feature type="mutagenesis site" description="Loss of actin-binding." evidence="8">
    <original>F</original>
    <variation>D</variation>
    <location>
        <position position="455"/>
    </location>
</feature>
<feature type="sequence conflict" description="In Ref. 2; BAC11416." evidence="15" ref="2">
    <original>V</original>
    <variation>M</variation>
    <location>
        <position position="48"/>
    </location>
</feature>
<feature type="sequence conflict" description="In Ref. 1; AAK60494." evidence="15" ref="1">
    <original>G</original>
    <variation>D</variation>
    <location>
        <position position="476"/>
    </location>
</feature>
<feature type="sequence conflict" description="In Ref. 1; AAK60494." evidence="15" ref="1">
    <original>P</original>
    <variation>S</variation>
    <location>
        <position position="546"/>
    </location>
</feature>
<feature type="helix" evidence="20">
    <location>
        <begin position="8"/>
        <end position="11"/>
    </location>
</feature>
<feature type="turn" evidence="20">
    <location>
        <begin position="12"/>
        <end position="14"/>
    </location>
</feature>
<feature type="strand" evidence="20">
    <location>
        <begin position="15"/>
        <end position="24"/>
    </location>
</feature>
<feature type="strand" evidence="20">
    <location>
        <begin position="29"/>
        <end position="31"/>
    </location>
</feature>
<feature type="helix" evidence="20">
    <location>
        <begin position="34"/>
        <end position="36"/>
    </location>
</feature>
<feature type="strand" evidence="20">
    <location>
        <begin position="39"/>
        <end position="41"/>
    </location>
</feature>
<feature type="strand" evidence="20">
    <location>
        <begin position="45"/>
        <end position="53"/>
    </location>
</feature>
<feature type="strand" evidence="20">
    <location>
        <begin position="58"/>
        <end position="66"/>
    </location>
</feature>
<feature type="helix" evidence="20">
    <location>
        <begin position="72"/>
        <end position="88"/>
    </location>
</feature>
<feature type="turn" evidence="20">
    <location>
        <begin position="89"/>
        <end position="91"/>
    </location>
</feature>
<feature type="strand" evidence="20">
    <location>
        <begin position="93"/>
        <end position="99"/>
    </location>
</feature>
<feature type="turn" evidence="20">
    <location>
        <begin position="100"/>
        <end position="102"/>
    </location>
</feature>
<feature type="helix" evidence="20">
    <location>
        <begin position="105"/>
        <end position="108"/>
    </location>
</feature>
<feature type="strand" evidence="20">
    <location>
        <begin position="115"/>
        <end position="119"/>
    </location>
</feature>
<feature type="turn" evidence="20">
    <location>
        <begin position="122"/>
        <end position="125"/>
    </location>
</feature>
<feature type="strand" evidence="20">
    <location>
        <begin position="138"/>
        <end position="143"/>
    </location>
</feature>
<feature type="strand" evidence="20">
    <location>
        <begin position="145"/>
        <end position="147"/>
    </location>
</feature>
<feature type="strand" evidence="20">
    <location>
        <begin position="149"/>
        <end position="153"/>
    </location>
</feature>
<feature type="strand" evidence="20">
    <location>
        <begin position="164"/>
        <end position="169"/>
    </location>
</feature>
<feature type="strand" evidence="20">
    <location>
        <begin position="171"/>
        <end position="178"/>
    </location>
</feature>
<feature type="helix" evidence="20">
    <location>
        <begin position="184"/>
        <end position="202"/>
    </location>
</feature>
<feature type="strand" evidence="20">
    <location>
        <begin position="206"/>
        <end position="212"/>
    </location>
</feature>
<feature type="helix" evidence="20">
    <location>
        <begin position="218"/>
        <end position="223"/>
    </location>
</feature>
<feature type="strand" evidence="21">
    <location>
        <begin position="250"/>
        <end position="255"/>
    </location>
</feature>
<feature type="strand" evidence="21">
    <location>
        <begin position="262"/>
        <end position="272"/>
    </location>
</feature>
<feature type="helix" evidence="21">
    <location>
        <begin position="274"/>
        <end position="276"/>
    </location>
</feature>
<feature type="strand" evidence="21">
    <location>
        <begin position="281"/>
        <end position="287"/>
    </location>
</feature>
<feature type="helix" evidence="21">
    <location>
        <begin position="288"/>
        <end position="290"/>
    </location>
</feature>
<feature type="strand" evidence="21">
    <location>
        <begin position="292"/>
        <end position="297"/>
    </location>
</feature>
<feature type="helix" evidence="21">
    <location>
        <begin position="303"/>
        <end position="319"/>
    </location>
</feature>
<feature type="strand" evidence="21">
    <location>
        <begin position="327"/>
        <end position="332"/>
    </location>
</feature>
<feature type="helix" evidence="21">
    <location>
        <begin position="338"/>
        <end position="341"/>
    </location>
</feature>
<feature type="strand" evidence="21">
    <location>
        <begin position="344"/>
        <end position="346"/>
    </location>
</feature>
<feature type="strand" evidence="19">
    <location>
        <begin position="397"/>
        <end position="403"/>
    </location>
</feature>
<feature type="strand" evidence="19">
    <location>
        <begin position="405"/>
        <end position="410"/>
    </location>
</feature>
<feature type="helix" evidence="19">
    <location>
        <begin position="413"/>
        <end position="415"/>
    </location>
</feature>
<feature type="strand" evidence="19">
    <location>
        <begin position="424"/>
        <end position="430"/>
    </location>
</feature>
<feature type="strand" evidence="19">
    <location>
        <begin position="435"/>
        <end position="441"/>
    </location>
</feature>
<feature type="helix" evidence="19">
    <location>
        <begin position="447"/>
        <end position="463"/>
    </location>
</feature>
<feature type="strand" evidence="19">
    <location>
        <begin position="469"/>
        <end position="474"/>
    </location>
</feature>
<feature type="helix" evidence="19">
    <location>
        <begin position="480"/>
        <end position="483"/>
    </location>
</feature>
<feature type="strand" evidence="19">
    <location>
        <begin position="491"/>
        <end position="493"/>
    </location>
</feature>
<feature type="strand" evidence="19">
    <location>
        <begin position="511"/>
        <end position="516"/>
    </location>
</feature>
<feature type="strand" evidence="19">
    <location>
        <begin position="519"/>
        <end position="521"/>
    </location>
</feature>
<feature type="strand" evidence="19">
    <location>
        <begin position="524"/>
        <end position="528"/>
    </location>
</feature>
<feature type="helix" evidence="19">
    <location>
        <begin position="532"/>
        <end position="534"/>
    </location>
</feature>
<feature type="strand" evidence="19">
    <location>
        <begin position="539"/>
        <end position="544"/>
    </location>
</feature>
<feature type="strand" evidence="19">
    <location>
        <begin position="548"/>
        <end position="554"/>
    </location>
</feature>
<feature type="helix" evidence="19">
    <location>
        <begin position="560"/>
        <end position="572"/>
    </location>
</feature>
<feature type="strand" evidence="19">
    <location>
        <begin position="576"/>
        <end position="581"/>
    </location>
</feature>
<feature type="helix" evidence="19">
    <location>
        <begin position="587"/>
        <end position="592"/>
    </location>
</feature>
<feature type="turn" evidence="19">
    <location>
        <begin position="603"/>
        <end position="605"/>
    </location>
</feature>
<feature type="strand" evidence="19">
    <location>
        <begin position="615"/>
        <end position="620"/>
    </location>
</feature>
<feature type="strand" evidence="19">
    <location>
        <begin position="627"/>
        <end position="630"/>
    </location>
</feature>
<feature type="helix" evidence="19">
    <location>
        <begin position="637"/>
        <end position="639"/>
    </location>
</feature>
<feature type="strand" evidence="19">
    <location>
        <begin position="644"/>
        <end position="649"/>
    </location>
</feature>
<feature type="strand" evidence="19">
    <location>
        <begin position="654"/>
        <end position="658"/>
    </location>
</feature>
<feature type="helix" evidence="19">
    <location>
        <begin position="664"/>
        <end position="674"/>
    </location>
</feature>
<feature type="strand" evidence="19">
    <location>
        <begin position="680"/>
        <end position="683"/>
    </location>
</feature>
<feature type="strand" evidence="19">
    <location>
        <begin position="691"/>
        <end position="695"/>
    </location>
</feature>
<feature type="helix" evidence="19">
    <location>
        <begin position="701"/>
        <end position="704"/>
    </location>
</feature>
<feature type="strand" evidence="19">
    <location>
        <begin position="707"/>
        <end position="709"/>
    </location>
</feature>
<keyword id="KW-0002">3D-structure</keyword>
<keyword id="KW-0117">Actin capping</keyword>
<keyword id="KW-0009">Actin-binding</keyword>
<keyword id="KW-0025">Alternative splicing</keyword>
<keyword id="KW-0106">Calcium</keyword>
<keyword id="KW-0965">Cell junction</keyword>
<keyword id="KW-0966">Cell projection</keyword>
<keyword id="KW-0963">Cytoplasm</keyword>
<keyword id="KW-0206">Cytoskeleton</keyword>
<keyword id="KW-0479">Metal-binding</keyword>
<keyword id="KW-0597">Phosphoprotein</keyword>
<keyword id="KW-1267">Proteomics identification</keyword>
<keyword id="KW-1185">Reference proteome</keyword>
<keyword id="KW-0677">Repeat</keyword>
<dbReference type="EMBL" id="AF276507">
    <property type="protein sequence ID" value="AAK60494.1"/>
    <property type="molecule type" value="mRNA"/>
</dbReference>
<dbReference type="EMBL" id="AK027778">
    <property type="protein sequence ID" value="BAB55361.1"/>
    <property type="molecule type" value="mRNA"/>
</dbReference>
<dbReference type="EMBL" id="AK075123">
    <property type="protein sequence ID" value="BAC11416.1"/>
    <property type="molecule type" value="mRNA"/>
</dbReference>
<dbReference type="EMBL" id="AK290363">
    <property type="protein sequence ID" value="BAF83052.1"/>
    <property type="molecule type" value="mRNA"/>
</dbReference>
<dbReference type="EMBL" id="AB067492">
    <property type="protein sequence ID" value="BAB67798.1"/>
    <property type="status" value="ALT_INIT"/>
    <property type="molecule type" value="mRNA"/>
</dbReference>
<dbReference type="EMBL" id="AC005281">
    <property type="protein sequence ID" value="AAD15423.1"/>
    <property type="molecule type" value="Genomic_DNA"/>
</dbReference>
<dbReference type="EMBL" id="CH471073">
    <property type="protein sequence ID" value="EAW93647.1"/>
    <property type="molecule type" value="Genomic_DNA"/>
</dbReference>
<dbReference type="EMBL" id="BC021090">
    <property type="protein sequence ID" value="AAH21090.1"/>
    <property type="molecule type" value="mRNA"/>
</dbReference>
<dbReference type="EMBL" id="BU193785">
    <property type="status" value="NOT_ANNOTATED_CDS"/>
    <property type="molecule type" value="mRNA"/>
</dbReference>
<dbReference type="CCDS" id="CCDS47545.1">
    <molecule id="Q9Y6U3-1"/>
</dbReference>
<dbReference type="CCDS" id="CCDS47546.1">
    <molecule id="Q9Y6U3-3"/>
</dbReference>
<dbReference type="RefSeq" id="NP_001106177.1">
    <molecule id="Q9Y6U3-1"/>
    <property type="nucleotide sequence ID" value="NM_001112706.3"/>
</dbReference>
<dbReference type="RefSeq" id="NP_149119.1">
    <molecule id="Q9Y6U3-3"/>
    <property type="nucleotide sequence ID" value="NM_033128.3"/>
</dbReference>
<dbReference type="PDB" id="3FG6">
    <property type="method" value="X-ray"/>
    <property type="resolution" value="3.00 A"/>
    <property type="chains" value="A/B/C/D/E/F/G/H=345-715"/>
</dbReference>
<dbReference type="PDB" id="5A1K">
    <property type="method" value="X-ray"/>
    <property type="resolution" value="2.90 A"/>
    <property type="chains" value="A/B=6-349"/>
</dbReference>
<dbReference type="PDB" id="5A1M">
    <property type="method" value="X-ray"/>
    <property type="resolution" value="1.81 A"/>
    <property type="chains" value="A=247-350"/>
</dbReference>
<dbReference type="PDBsum" id="3FG6"/>
<dbReference type="PDBsum" id="5A1K"/>
<dbReference type="PDBsum" id="5A1M"/>
<dbReference type="SMR" id="Q9Y6U3"/>
<dbReference type="BioGRID" id="124552">
    <property type="interactions" value="83"/>
</dbReference>
<dbReference type="FunCoup" id="Q9Y6U3">
    <property type="interactions" value="641"/>
</dbReference>
<dbReference type="IntAct" id="Q9Y6U3">
    <property type="interactions" value="27"/>
</dbReference>
<dbReference type="MINT" id="Q9Y6U3"/>
<dbReference type="STRING" id="9606.ENSP00000297029"/>
<dbReference type="CarbonylDB" id="Q9Y6U3"/>
<dbReference type="GlyGen" id="Q9Y6U3">
    <property type="glycosylation" value="1 site, 1 O-linked glycan (1 site)"/>
</dbReference>
<dbReference type="iPTMnet" id="Q9Y6U3"/>
<dbReference type="MetOSite" id="Q9Y6U3"/>
<dbReference type="PhosphoSitePlus" id="Q9Y6U3"/>
<dbReference type="BioMuta" id="SCIN"/>
<dbReference type="DMDM" id="57015325"/>
<dbReference type="jPOST" id="Q9Y6U3"/>
<dbReference type="MassIVE" id="Q9Y6U3"/>
<dbReference type="PaxDb" id="9606-ENSP00000297029"/>
<dbReference type="PeptideAtlas" id="Q9Y6U3"/>
<dbReference type="ProteomicsDB" id="86789">
    <molecule id="Q9Y6U3-1"/>
</dbReference>
<dbReference type="ProteomicsDB" id="86790">
    <molecule id="Q9Y6U3-2"/>
</dbReference>
<dbReference type="ProteomicsDB" id="86791">
    <molecule id="Q9Y6U3-3"/>
</dbReference>
<dbReference type="Pumba" id="Q9Y6U3"/>
<dbReference type="Antibodypedia" id="6300">
    <property type="antibodies" value="106 antibodies from 25 providers"/>
</dbReference>
<dbReference type="DNASU" id="85477"/>
<dbReference type="Ensembl" id="ENST00000297029.10">
    <molecule id="Q9Y6U3-1"/>
    <property type="protein sequence ID" value="ENSP00000297029.5"/>
    <property type="gene ID" value="ENSG00000006747.15"/>
</dbReference>
<dbReference type="Ensembl" id="ENST00000341757.9">
    <molecule id="Q9Y6U3-2"/>
    <property type="protein sequence ID" value="ENSP00000341375.5"/>
    <property type="gene ID" value="ENSG00000006747.15"/>
</dbReference>
<dbReference type="Ensembl" id="ENST00000519209.5">
    <molecule id="Q9Y6U3-3"/>
    <property type="protein sequence ID" value="ENSP00000430997.1"/>
    <property type="gene ID" value="ENSG00000006747.15"/>
</dbReference>
<dbReference type="GeneID" id="85477"/>
<dbReference type="KEGG" id="hsa:85477"/>
<dbReference type="MANE-Select" id="ENST00000297029.10">
    <property type="protein sequence ID" value="ENSP00000297029.5"/>
    <property type="RefSeq nucleotide sequence ID" value="NM_001112706.3"/>
    <property type="RefSeq protein sequence ID" value="NP_001106177.1"/>
</dbReference>
<dbReference type="UCSC" id="uc003ssn.5">
    <molecule id="Q9Y6U3-1"/>
    <property type="organism name" value="human"/>
</dbReference>
<dbReference type="AGR" id="HGNC:21695"/>
<dbReference type="CTD" id="85477"/>
<dbReference type="DisGeNET" id="85477"/>
<dbReference type="GeneCards" id="SCIN"/>
<dbReference type="HGNC" id="HGNC:21695">
    <property type="gene designation" value="SCIN"/>
</dbReference>
<dbReference type="HPA" id="ENSG00000006747">
    <property type="expression patterns" value="Tissue enhanced (intestine, kidney, placenta)"/>
</dbReference>
<dbReference type="MIM" id="613416">
    <property type="type" value="gene"/>
</dbReference>
<dbReference type="neXtProt" id="NX_Q9Y6U3"/>
<dbReference type="OpenTargets" id="ENSG00000006747"/>
<dbReference type="PharmGKB" id="PA134981389"/>
<dbReference type="VEuPathDB" id="HostDB:ENSG00000006747"/>
<dbReference type="eggNOG" id="KOG0443">
    <property type="taxonomic scope" value="Eukaryota"/>
</dbReference>
<dbReference type="GeneTree" id="ENSGT00940000159083"/>
<dbReference type="HOGENOM" id="CLU_002568_3_0_1"/>
<dbReference type="InParanoid" id="Q9Y6U3"/>
<dbReference type="OMA" id="GHESTDF"/>
<dbReference type="OrthoDB" id="6375767at2759"/>
<dbReference type="PAN-GO" id="Q9Y6U3">
    <property type="GO annotations" value="9 GO annotations based on evolutionary models"/>
</dbReference>
<dbReference type="PhylomeDB" id="Q9Y6U3"/>
<dbReference type="TreeFam" id="TF313468"/>
<dbReference type="PathwayCommons" id="Q9Y6U3"/>
<dbReference type="SignaLink" id="Q9Y6U3"/>
<dbReference type="BioGRID-ORCS" id="85477">
    <property type="hits" value="14 hits in 1159 CRISPR screens"/>
</dbReference>
<dbReference type="CD-CODE" id="91857CE7">
    <property type="entry name" value="Nucleolus"/>
</dbReference>
<dbReference type="CD-CODE" id="FB4E32DD">
    <property type="entry name" value="Presynaptic clusters and postsynaptic densities"/>
</dbReference>
<dbReference type="ChiTaRS" id="SCIN">
    <property type="organism name" value="human"/>
</dbReference>
<dbReference type="EvolutionaryTrace" id="Q9Y6U3"/>
<dbReference type="GeneWiki" id="SCIN"/>
<dbReference type="GenomeRNAi" id="85477"/>
<dbReference type="Pharos" id="Q9Y6U3">
    <property type="development level" value="Tbio"/>
</dbReference>
<dbReference type="PRO" id="PR:Q9Y6U3"/>
<dbReference type="Proteomes" id="UP000005640">
    <property type="component" value="Chromosome 7"/>
</dbReference>
<dbReference type="RNAct" id="Q9Y6U3">
    <property type="molecule type" value="protein"/>
</dbReference>
<dbReference type="Bgee" id="ENSG00000006747">
    <property type="expression patterns" value="Expressed in jejunal mucosa and 166 other cell types or tissues"/>
</dbReference>
<dbReference type="ExpressionAtlas" id="Q9Y6U3">
    <property type="expression patterns" value="baseline and differential"/>
</dbReference>
<dbReference type="GO" id="GO:0015629">
    <property type="term" value="C:actin cytoskeleton"/>
    <property type="evidence" value="ECO:0000318"/>
    <property type="project" value="GO_Central"/>
</dbReference>
<dbReference type="GO" id="GO:0070161">
    <property type="term" value="C:anchoring junction"/>
    <property type="evidence" value="ECO:0007669"/>
    <property type="project" value="UniProtKB-KW"/>
</dbReference>
<dbReference type="GO" id="GO:0005903">
    <property type="term" value="C:brush border"/>
    <property type="evidence" value="ECO:0007669"/>
    <property type="project" value="Ensembl"/>
</dbReference>
<dbReference type="GO" id="GO:0005938">
    <property type="term" value="C:cell cortex"/>
    <property type="evidence" value="ECO:0000250"/>
    <property type="project" value="UniProtKB"/>
</dbReference>
<dbReference type="GO" id="GO:0042995">
    <property type="term" value="C:cell projection"/>
    <property type="evidence" value="ECO:0007669"/>
    <property type="project" value="UniProtKB-KW"/>
</dbReference>
<dbReference type="GO" id="GO:0005737">
    <property type="term" value="C:cytoplasm"/>
    <property type="evidence" value="ECO:0000250"/>
    <property type="project" value="UniProtKB"/>
</dbReference>
<dbReference type="GO" id="GO:0070062">
    <property type="term" value="C:extracellular exosome"/>
    <property type="evidence" value="ECO:0007005"/>
    <property type="project" value="UniProtKB"/>
</dbReference>
<dbReference type="GO" id="GO:0002102">
    <property type="term" value="C:podosome"/>
    <property type="evidence" value="ECO:0007669"/>
    <property type="project" value="UniProtKB-SubCell"/>
</dbReference>
<dbReference type="GO" id="GO:0005545">
    <property type="term" value="F:1-phosphatidylinositol binding"/>
    <property type="evidence" value="ECO:0000304"/>
    <property type="project" value="UniProtKB"/>
</dbReference>
<dbReference type="GO" id="GO:0003779">
    <property type="term" value="F:actin binding"/>
    <property type="evidence" value="ECO:0000250"/>
    <property type="project" value="UniProtKB"/>
</dbReference>
<dbReference type="GO" id="GO:0051015">
    <property type="term" value="F:actin filament binding"/>
    <property type="evidence" value="ECO:0000250"/>
    <property type="project" value="UniProtKB"/>
</dbReference>
<dbReference type="GO" id="GO:0005509">
    <property type="term" value="F:calcium ion binding"/>
    <property type="evidence" value="ECO:0000250"/>
    <property type="project" value="UniProtKB"/>
</dbReference>
<dbReference type="GO" id="GO:0005546">
    <property type="term" value="F:phosphatidylinositol-4,5-bisphosphate binding"/>
    <property type="evidence" value="ECO:0000250"/>
    <property type="project" value="UniProtKB"/>
</dbReference>
<dbReference type="GO" id="GO:0001786">
    <property type="term" value="F:phosphatidylserine binding"/>
    <property type="evidence" value="ECO:0000250"/>
    <property type="project" value="UniProtKB"/>
</dbReference>
<dbReference type="GO" id="GO:0051693">
    <property type="term" value="P:actin filament capping"/>
    <property type="evidence" value="ECO:0000315"/>
    <property type="project" value="UniProtKB"/>
</dbReference>
<dbReference type="GO" id="GO:0051014">
    <property type="term" value="P:actin filament severing"/>
    <property type="evidence" value="ECO:0000315"/>
    <property type="project" value="UniProtKB"/>
</dbReference>
<dbReference type="GO" id="GO:0045010">
    <property type="term" value="P:actin nucleation"/>
    <property type="evidence" value="ECO:0000250"/>
    <property type="project" value="UniProtKB"/>
</dbReference>
<dbReference type="GO" id="GO:0008154">
    <property type="term" value="P:actin polymerization or depolymerization"/>
    <property type="evidence" value="ECO:0000318"/>
    <property type="project" value="GO_Central"/>
</dbReference>
<dbReference type="GO" id="GO:0051016">
    <property type="term" value="P:barbed-end actin filament capping"/>
    <property type="evidence" value="ECO:0000318"/>
    <property type="project" value="GO_Central"/>
</dbReference>
<dbReference type="GO" id="GO:0017156">
    <property type="term" value="P:calcium-ion regulated exocytosis"/>
    <property type="evidence" value="ECO:0000250"/>
    <property type="project" value="UniProtKB"/>
</dbReference>
<dbReference type="GO" id="GO:0030031">
    <property type="term" value="P:cell projection assembly"/>
    <property type="evidence" value="ECO:0000318"/>
    <property type="project" value="GO_Central"/>
</dbReference>
<dbReference type="GO" id="GO:0007417">
    <property type="term" value="P:central nervous system development"/>
    <property type="evidence" value="ECO:0000318"/>
    <property type="project" value="GO_Central"/>
</dbReference>
<dbReference type="GO" id="GO:0008285">
    <property type="term" value="P:negative regulation of cell population proliferation"/>
    <property type="evidence" value="ECO:0000315"/>
    <property type="project" value="UniProtKB"/>
</dbReference>
<dbReference type="GO" id="GO:0051127">
    <property type="term" value="P:positive regulation of actin nucleation"/>
    <property type="evidence" value="ECO:0000315"/>
    <property type="project" value="UniProtKB"/>
</dbReference>
<dbReference type="GO" id="GO:0043065">
    <property type="term" value="P:positive regulation of apoptotic process"/>
    <property type="evidence" value="ECO:0000315"/>
    <property type="project" value="UniProtKB"/>
</dbReference>
<dbReference type="GO" id="GO:0045654">
    <property type="term" value="P:positive regulation of megakaryocyte differentiation"/>
    <property type="evidence" value="ECO:0000315"/>
    <property type="project" value="UniProtKB"/>
</dbReference>
<dbReference type="GO" id="GO:0051047">
    <property type="term" value="P:positive regulation of secretion"/>
    <property type="evidence" value="ECO:0000250"/>
    <property type="project" value="UniProtKB"/>
</dbReference>
<dbReference type="GO" id="GO:0032330">
    <property type="term" value="P:regulation of chondrocyte differentiation"/>
    <property type="evidence" value="ECO:0000250"/>
    <property type="project" value="UniProtKB"/>
</dbReference>
<dbReference type="CDD" id="cd11290">
    <property type="entry name" value="gelsolin_S1_like"/>
    <property type="match status" value="1"/>
</dbReference>
<dbReference type="CDD" id="cd11289">
    <property type="entry name" value="gelsolin_S2_like"/>
    <property type="match status" value="1"/>
</dbReference>
<dbReference type="CDD" id="cd11292">
    <property type="entry name" value="gelsolin_S3_like"/>
    <property type="match status" value="1"/>
</dbReference>
<dbReference type="CDD" id="cd11293">
    <property type="entry name" value="gelsolin_S4_like"/>
    <property type="match status" value="1"/>
</dbReference>
<dbReference type="CDD" id="cd11288">
    <property type="entry name" value="gelsolin_S5_like"/>
    <property type="match status" value="1"/>
</dbReference>
<dbReference type="CDD" id="cd11291">
    <property type="entry name" value="gelsolin_S6_like"/>
    <property type="match status" value="1"/>
</dbReference>
<dbReference type="FunFam" id="3.40.20.10:FF:000001">
    <property type="entry name" value="Gelsolin"/>
    <property type="match status" value="1"/>
</dbReference>
<dbReference type="FunFam" id="3.40.20.10:FF:000002">
    <property type="entry name" value="Gelsolin"/>
    <property type="match status" value="1"/>
</dbReference>
<dbReference type="FunFam" id="3.40.20.10:FF:000004">
    <property type="entry name" value="Gelsolin"/>
    <property type="match status" value="1"/>
</dbReference>
<dbReference type="FunFam" id="3.40.20.10:FF:000005">
    <property type="entry name" value="Gelsolin"/>
    <property type="match status" value="1"/>
</dbReference>
<dbReference type="FunFam" id="3.40.20.10:FF:000009">
    <property type="entry name" value="gelsolin isoform X1"/>
    <property type="match status" value="1"/>
</dbReference>
<dbReference type="FunFam" id="3.40.20.10:FF:000008">
    <property type="entry name" value="gelsolin isoform X2"/>
    <property type="match status" value="1"/>
</dbReference>
<dbReference type="Gene3D" id="3.40.20.10">
    <property type="entry name" value="Severin"/>
    <property type="match status" value="6"/>
</dbReference>
<dbReference type="InterPro" id="IPR029006">
    <property type="entry name" value="ADF-H/Gelsolin-like_dom_sf"/>
</dbReference>
<dbReference type="InterPro" id="IPR007123">
    <property type="entry name" value="Gelsolin-like_dom"/>
</dbReference>
<dbReference type="InterPro" id="IPR036180">
    <property type="entry name" value="Gelsolin-like_dom_sf"/>
</dbReference>
<dbReference type="InterPro" id="IPR007122">
    <property type="entry name" value="Villin/Gelsolin"/>
</dbReference>
<dbReference type="PANTHER" id="PTHR11977:SF78">
    <property type="entry name" value="SCINDERIN"/>
    <property type="match status" value="1"/>
</dbReference>
<dbReference type="PANTHER" id="PTHR11977">
    <property type="entry name" value="VILLIN"/>
    <property type="match status" value="1"/>
</dbReference>
<dbReference type="Pfam" id="PF00626">
    <property type="entry name" value="Gelsolin"/>
    <property type="match status" value="6"/>
</dbReference>
<dbReference type="PRINTS" id="PR00597">
    <property type="entry name" value="GELSOLIN"/>
</dbReference>
<dbReference type="SMART" id="SM00262">
    <property type="entry name" value="GEL"/>
    <property type="match status" value="6"/>
</dbReference>
<dbReference type="SUPFAM" id="SSF55753">
    <property type="entry name" value="Actin depolymerizing proteins"/>
    <property type="match status" value="5"/>
</dbReference>
<dbReference type="SUPFAM" id="SSF82754">
    <property type="entry name" value="C-terminal, gelsolin-like domain of Sec23/24"/>
    <property type="match status" value="1"/>
</dbReference>
<gene>
    <name evidence="14 17" type="primary">SCIN</name>
    <name type="synonym">KIAA1905</name>
</gene>
<organism>
    <name type="scientific">Homo sapiens</name>
    <name type="common">Human</name>
    <dbReference type="NCBI Taxonomy" id="9606"/>
    <lineage>
        <taxon>Eukaryota</taxon>
        <taxon>Metazoa</taxon>
        <taxon>Chordata</taxon>
        <taxon>Craniata</taxon>
        <taxon>Vertebrata</taxon>
        <taxon>Euteleostomi</taxon>
        <taxon>Mammalia</taxon>
        <taxon>Eutheria</taxon>
        <taxon>Euarchontoglires</taxon>
        <taxon>Primates</taxon>
        <taxon>Haplorrhini</taxon>
        <taxon>Catarrhini</taxon>
        <taxon>Hominidae</taxon>
        <taxon>Homo</taxon>
    </lineage>
</organism>
<name>SCIN_HUMAN</name>
<accession>Q9Y6U3</accession>
<accession>A8K2U8</accession>
<accession>Q8NBZ6</accession>
<accession>Q8WU97</accession>
<accession>Q96JC7</accession>
<accession>Q96PY2</accession>
<protein>
    <recommendedName>
        <fullName evidence="14">Scinderin</fullName>
    </recommendedName>
    <alternativeName>
        <fullName evidence="13">Adseverin</fullName>
    </alternativeName>
</protein>